<comment type="subcellular location">
    <subcellularLocation>
        <location evidence="1">Cytoplasm</location>
    </subcellularLocation>
</comment>
<comment type="similarity">
    <text evidence="1">Belongs to the TACO1 family.</text>
</comment>
<name>Y1385_BURP1</name>
<gene>
    <name type="ordered locus">BURPS1710b_1385</name>
</gene>
<keyword id="KW-0963">Cytoplasm</keyword>
<keyword id="KW-0238">DNA-binding</keyword>
<keyword id="KW-0804">Transcription</keyword>
<keyword id="KW-0805">Transcription regulation</keyword>
<organism>
    <name type="scientific">Burkholderia pseudomallei (strain 1710b)</name>
    <dbReference type="NCBI Taxonomy" id="320372"/>
    <lineage>
        <taxon>Bacteria</taxon>
        <taxon>Pseudomonadati</taxon>
        <taxon>Pseudomonadota</taxon>
        <taxon>Betaproteobacteria</taxon>
        <taxon>Burkholderiales</taxon>
        <taxon>Burkholderiaceae</taxon>
        <taxon>Burkholderia</taxon>
        <taxon>pseudomallei group</taxon>
    </lineage>
</organism>
<sequence>MAGHSKWANIKHKKAAADAKRGKIWTRLIKEIQVAARLGGGDVNSNPRLRLAVDKAADANMPKDNVKRAIDRGVGGADGANYEEIRYEGYGIGGAAIIVDTLTDNRTRTVAEVRHAFSKFGGNMGTDGSVAFMFDHVGQFLFAPGTSEDALMEAALEAGANDVNTNDDGSIEVLCDWQEFSKVKDALEAAGFKAELAEVTMKPQNEVDFTGEDAVKMQKLLDALENLDDVQEVYTNAVVVEE</sequence>
<protein>
    <recommendedName>
        <fullName evidence="1">Probable transcriptional regulatory protein BURPS1710b_1385</fullName>
    </recommendedName>
</protein>
<dbReference type="EMBL" id="CP000124">
    <property type="protein sequence ID" value="ABA48361.1"/>
    <property type="molecule type" value="Genomic_DNA"/>
</dbReference>
<dbReference type="RefSeq" id="WP_004185607.1">
    <property type="nucleotide sequence ID" value="NC_007434.1"/>
</dbReference>
<dbReference type="SMR" id="Q3JUF8"/>
<dbReference type="EnsemblBacteria" id="ABA48361">
    <property type="protein sequence ID" value="ABA48361"/>
    <property type="gene ID" value="BURPS1710b_1385"/>
</dbReference>
<dbReference type="KEGG" id="bpm:BURPS1710b_1385"/>
<dbReference type="HOGENOM" id="CLU_062974_2_2_4"/>
<dbReference type="Proteomes" id="UP000002700">
    <property type="component" value="Chromosome I"/>
</dbReference>
<dbReference type="GO" id="GO:0005829">
    <property type="term" value="C:cytosol"/>
    <property type="evidence" value="ECO:0007669"/>
    <property type="project" value="TreeGrafter"/>
</dbReference>
<dbReference type="GO" id="GO:0003677">
    <property type="term" value="F:DNA binding"/>
    <property type="evidence" value="ECO:0007669"/>
    <property type="project" value="UniProtKB-UniRule"/>
</dbReference>
<dbReference type="GO" id="GO:0006355">
    <property type="term" value="P:regulation of DNA-templated transcription"/>
    <property type="evidence" value="ECO:0007669"/>
    <property type="project" value="UniProtKB-UniRule"/>
</dbReference>
<dbReference type="FunFam" id="1.10.10.200:FF:000001">
    <property type="entry name" value="Probable transcriptional regulatory protein YebC"/>
    <property type="match status" value="1"/>
</dbReference>
<dbReference type="FunFam" id="3.30.70.980:FF:000002">
    <property type="entry name" value="Probable transcriptional regulatory protein YebC"/>
    <property type="match status" value="1"/>
</dbReference>
<dbReference type="Gene3D" id="1.10.10.200">
    <property type="match status" value="1"/>
</dbReference>
<dbReference type="Gene3D" id="3.30.70.980">
    <property type="match status" value="2"/>
</dbReference>
<dbReference type="HAMAP" id="MF_00693">
    <property type="entry name" value="Transcrip_reg_TACO1"/>
    <property type="match status" value="1"/>
</dbReference>
<dbReference type="InterPro" id="IPR017856">
    <property type="entry name" value="Integrase-like_N"/>
</dbReference>
<dbReference type="InterPro" id="IPR048300">
    <property type="entry name" value="TACO1_YebC-like_2nd/3rd_dom"/>
</dbReference>
<dbReference type="InterPro" id="IPR049083">
    <property type="entry name" value="TACO1_YebC_N"/>
</dbReference>
<dbReference type="InterPro" id="IPR002876">
    <property type="entry name" value="Transcrip_reg_TACO1-like"/>
</dbReference>
<dbReference type="InterPro" id="IPR026564">
    <property type="entry name" value="Transcrip_reg_TACO1-like_dom3"/>
</dbReference>
<dbReference type="InterPro" id="IPR029072">
    <property type="entry name" value="YebC-like"/>
</dbReference>
<dbReference type="NCBIfam" id="NF001030">
    <property type="entry name" value="PRK00110.1"/>
    <property type="match status" value="1"/>
</dbReference>
<dbReference type="NCBIfam" id="NF009044">
    <property type="entry name" value="PRK12378.1"/>
    <property type="match status" value="1"/>
</dbReference>
<dbReference type="NCBIfam" id="TIGR01033">
    <property type="entry name" value="YebC/PmpR family DNA-binding transcriptional regulator"/>
    <property type="match status" value="1"/>
</dbReference>
<dbReference type="PANTHER" id="PTHR12532:SF6">
    <property type="entry name" value="TRANSCRIPTIONAL REGULATORY PROTEIN YEBC-RELATED"/>
    <property type="match status" value="1"/>
</dbReference>
<dbReference type="PANTHER" id="PTHR12532">
    <property type="entry name" value="TRANSLATIONAL ACTIVATOR OF CYTOCHROME C OXIDASE 1"/>
    <property type="match status" value="1"/>
</dbReference>
<dbReference type="Pfam" id="PF20772">
    <property type="entry name" value="TACO1_YebC_N"/>
    <property type="match status" value="1"/>
</dbReference>
<dbReference type="Pfam" id="PF01709">
    <property type="entry name" value="Transcrip_reg"/>
    <property type="match status" value="1"/>
</dbReference>
<dbReference type="SUPFAM" id="SSF75625">
    <property type="entry name" value="YebC-like"/>
    <property type="match status" value="1"/>
</dbReference>
<evidence type="ECO:0000255" key="1">
    <source>
        <dbReference type="HAMAP-Rule" id="MF_00693"/>
    </source>
</evidence>
<proteinExistence type="inferred from homology"/>
<reference key="1">
    <citation type="journal article" date="2010" name="Genome Biol. Evol.">
        <title>Continuing evolution of Burkholderia mallei through genome reduction and large-scale rearrangements.</title>
        <authorList>
            <person name="Losada L."/>
            <person name="Ronning C.M."/>
            <person name="DeShazer D."/>
            <person name="Woods D."/>
            <person name="Fedorova N."/>
            <person name="Kim H.S."/>
            <person name="Shabalina S.A."/>
            <person name="Pearson T.R."/>
            <person name="Brinkac L."/>
            <person name="Tan P."/>
            <person name="Nandi T."/>
            <person name="Crabtree J."/>
            <person name="Badger J."/>
            <person name="Beckstrom-Sternberg S."/>
            <person name="Saqib M."/>
            <person name="Schutzer S.E."/>
            <person name="Keim P."/>
            <person name="Nierman W.C."/>
        </authorList>
    </citation>
    <scope>NUCLEOTIDE SEQUENCE [LARGE SCALE GENOMIC DNA]</scope>
    <source>
        <strain>1710b</strain>
    </source>
</reference>
<accession>Q3JUF8</accession>
<feature type="chain" id="PRO_0000257037" description="Probable transcriptional regulatory protein BURPS1710b_1385">
    <location>
        <begin position="1"/>
        <end position="242"/>
    </location>
</feature>